<comment type="function">
    <text evidence="1">E1 component of the 2-oxoglutarate dehydrogenase (OGDH) complex which catalyzes the decarboxylation of 2-oxoglutarate, the first step in the conversion of 2-oxoglutarate to succinyl-CoA and CO(2).</text>
</comment>
<comment type="catalytic activity">
    <reaction evidence="1">
        <text>N(6)-[(R)-lipoyl]-L-lysyl-[protein] + 2-oxoglutarate + H(+) = N(6)-[(R)-S(8)-succinyldihydrolipoyl]-L-lysyl-[protein] + CO2</text>
        <dbReference type="Rhea" id="RHEA:12188"/>
        <dbReference type="Rhea" id="RHEA-COMP:10474"/>
        <dbReference type="Rhea" id="RHEA-COMP:20092"/>
        <dbReference type="ChEBI" id="CHEBI:15378"/>
        <dbReference type="ChEBI" id="CHEBI:16526"/>
        <dbReference type="ChEBI" id="CHEBI:16810"/>
        <dbReference type="ChEBI" id="CHEBI:83099"/>
        <dbReference type="ChEBI" id="CHEBI:83120"/>
        <dbReference type="EC" id="1.2.4.2"/>
    </reaction>
</comment>
<comment type="cofactor">
    <cofactor evidence="1">
        <name>thiamine diphosphate</name>
        <dbReference type="ChEBI" id="CHEBI:58937"/>
    </cofactor>
</comment>
<comment type="subunit">
    <text evidence="1">Homodimer. Part of the 2-oxoglutarate dehydrogenase (OGDH) complex composed of E1 (2-oxoglutarate dehydrogenase), E2 (dihydrolipoamide succinyltransferase) and E3 (dihydrolipoamide dehydrogenase); the complex contains multiple copies of the three enzymatic components (E1, E2 and E3).</text>
</comment>
<comment type="similarity">
    <text evidence="1">Belongs to the alpha-ketoglutarate dehydrogenase family.</text>
</comment>
<reference key="1">
    <citation type="submission" date="2008-10" db="EMBL/GenBank/DDBJ databases">
        <title>Genome sequence of Bacillus cereus G9842.</title>
        <authorList>
            <person name="Dodson R.J."/>
            <person name="Durkin A.S."/>
            <person name="Rosovitz M.J."/>
            <person name="Rasko D.A."/>
            <person name="Hoffmaster A."/>
            <person name="Ravel J."/>
            <person name="Sutton G."/>
        </authorList>
    </citation>
    <scope>NUCLEOTIDE SEQUENCE [LARGE SCALE GENOMIC DNA]</scope>
    <source>
        <strain>G9842</strain>
    </source>
</reference>
<protein>
    <recommendedName>
        <fullName evidence="1">2-oxoglutarate dehydrogenase E1 component</fullName>
        <ecNumber evidence="1">1.2.4.2</ecNumber>
    </recommendedName>
    <alternativeName>
        <fullName evidence="1">Alpha-ketoglutarate dehydrogenase</fullName>
    </alternativeName>
</protein>
<feature type="chain" id="PRO_1000137967" description="2-oxoglutarate dehydrogenase E1 component">
    <location>
        <begin position="1"/>
        <end position="955"/>
    </location>
</feature>
<sequence>MTRKNTTTNPWAKFHGPNLGYVIEQYDLYVTGAGSVDPELQELFEIFGAPSFQDDVVTGDNTATHFSPQNTGNIEKILKVVQLVEQIRSFGHTLAHINPMEDAANGQSLLEKAMNELSDADLKAIPAKTVWQDAPEGIHTALDVIHRLKDVYTKSLAYEFSHIQDSEERTWLHQMVESNSLRQPLSNKKRTALLKRLTAVEGFEQFLHKTFVGQKRFSIEGVDMLVPVLDEIVLEGAKNGVEDVMIGMAHRGRLSVLAHVLEKPYSHMFAEFKHAKIEGAVANSGWTGDVKYHLGREQVVSNEEVSTRVTLANNPSHLEFVNPVVEGFARAAQENRKKSGLPDQDISKSFVILVHGDAAFPGQGIVSETLNLSRLNAYQTGGTIHVIANNAVGFTTDSYDSRSTKYSSDLAKGFDIPIVHVNADDPEACLAAANLAIQYRMLFKKDFLIDLIGYRRYGHNEMDDPAVTQPQVYKKIKNHPTVRAIYADQLQAAGVLNADEVETITQFTQEQLKSDYAQVPPADTSDATIHVKVPDVVAKGIQPIDTGVEIDSLRAINEGLLSWPEGFNVYPKVKKILERRKDALEENGKIEWALAESLAFASILQEGTPIRLTGQDSQRGTFAHRHIVLHDTDTNETYSPLHRLPNINASFSVHNSPLSEAAVVGYEYGYNVFAPETLVMWEAQYGDFSNTAQALFDQYVSAGRAKWGQKSGLVLLLPHGYEGQGPEHSSARPERFLQLAAENNWTVANLTSAAQYFHILRRQASILGTEAVRPLVLMTPKSLLRHPLTLSTASQLSEGRFQPALEQENLGTKPNKVKRLVLSTGKMAIDLAAEIESGKHEYNLDEVHVVRIEQLYPFPAEKVQSIIKRFKNLEEIIWVQEEPRNMGAWHYMAPILFELAGDKVKTGYIGRPDRSSPSGGDPFAHKAEQELIVAHALDVKYNFRQDKQEIEVFSN</sequence>
<evidence type="ECO:0000255" key="1">
    <source>
        <dbReference type="HAMAP-Rule" id="MF_01169"/>
    </source>
</evidence>
<keyword id="KW-0324">Glycolysis</keyword>
<keyword id="KW-0560">Oxidoreductase</keyword>
<keyword id="KW-0786">Thiamine pyrophosphate</keyword>
<proteinExistence type="inferred from homology"/>
<dbReference type="EC" id="1.2.4.2" evidence="1"/>
<dbReference type="EMBL" id="CP001186">
    <property type="protein sequence ID" value="ACK96534.1"/>
    <property type="molecule type" value="Genomic_DNA"/>
</dbReference>
<dbReference type="RefSeq" id="WP_000197142.1">
    <property type="nucleotide sequence ID" value="NC_011772.1"/>
</dbReference>
<dbReference type="SMR" id="B7IM94"/>
<dbReference type="KEGG" id="bcg:BCG9842_B4030"/>
<dbReference type="HOGENOM" id="CLU_004709_1_0_9"/>
<dbReference type="Proteomes" id="UP000006744">
    <property type="component" value="Chromosome"/>
</dbReference>
<dbReference type="GO" id="GO:0005829">
    <property type="term" value="C:cytosol"/>
    <property type="evidence" value="ECO:0007669"/>
    <property type="project" value="TreeGrafter"/>
</dbReference>
<dbReference type="GO" id="GO:0045252">
    <property type="term" value="C:oxoglutarate dehydrogenase complex"/>
    <property type="evidence" value="ECO:0007669"/>
    <property type="project" value="TreeGrafter"/>
</dbReference>
<dbReference type="GO" id="GO:0004591">
    <property type="term" value="F:oxoglutarate dehydrogenase (succinyl-transferring) activity"/>
    <property type="evidence" value="ECO:0007669"/>
    <property type="project" value="UniProtKB-UniRule"/>
</dbReference>
<dbReference type="GO" id="GO:0030976">
    <property type="term" value="F:thiamine pyrophosphate binding"/>
    <property type="evidence" value="ECO:0007669"/>
    <property type="project" value="UniProtKB-UniRule"/>
</dbReference>
<dbReference type="GO" id="GO:0006096">
    <property type="term" value="P:glycolytic process"/>
    <property type="evidence" value="ECO:0007669"/>
    <property type="project" value="UniProtKB-UniRule"/>
</dbReference>
<dbReference type="GO" id="GO:0006099">
    <property type="term" value="P:tricarboxylic acid cycle"/>
    <property type="evidence" value="ECO:0007669"/>
    <property type="project" value="TreeGrafter"/>
</dbReference>
<dbReference type="CDD" id="cd02016">
    <property type="entry name" value="TPP_E1_OGDC_like"/>
    <property type="match status" value="1"/>
</dbReference>
<dbReference type="FunFam" id="3.40.50.11610:FF:000002">
    <property type="entry name" value="2-oxoglutarate dehydrogenase E1 component"/>
    <property type="match status" value="1"/>
</dbReference>
<dbReference type="FunFam" id="3.40.50.970:FF:000036">
    <property type="entry name" value="2-oxoglutarate dehydrogenase E1 component"/>
    <property type="match status" value="1"/>
</dbReference>
<dbReference type="Gene3D" id="3.40.50.12470">
    <property type="match status" value="1"/>
</dbReference>
<dbReference type="Gene3D" id="3.40.50.970">
    <property type="match status" value="1"/>
</dbReference>
<dbReference type="Gene3D" id="3.40.50.11610">
    <property type="entry name" value="Multifunctional 2-oxoglutarate metabolism enzyme, C-terminal domain"/>
    <property type="match status" value="1"/>
</dbReference>
<dbReference type="HAMAP" id="MF_01169">
    <property type="entry name" value="SucA_OdhA"/>
    <property type="match status" value="1"/>
</dbReference>
<dbReference type="InterPro" id="IPR011603">
    <property type="entry name" value="2oxoglutarate_DH_E1"/>
</dbReference>
<dbReference type="InterPro" id="IPR023784">
    <property type="entry name" value="2oxoglutarate_DH_E1_bac"/>
</dbReference>
<dbReference type="InterPro" id="IPR001017">
    <property type="entry name" value="DH_E1"/>
</dbReference>
<dbReference type="InterPro" id="IPR042179">
    <property type="entry name" value="KGD_C_sf"/>
</dbReference>
<dbReference type="InterPro" id="IPR031717">
    <property type="entry name" value="ODO-1/KGD_C"/>
</dbReference>
<dbReference type="InterPro" id="IPR029061">
    <property type="entry name" value="THDP-binding"/>
</dbReference>
<dbReference type="InterPro" id="IPR005475">
    <property type="entry name" value="Transketolase-like_Pyr-bd"/>
</dbReference>
<dbReference type="NCBIfam" id="TIGR00239">
    <property type="entry name" value="2oxo_dh_E1"/>
    <property type="match status" value="1"/>
</dbReference>
<dbReference type="NCBIfam" id="NF006914">
    <property type="entry name" value="PRK09404.1"/>
    <property type="match status" value="1"/>
</dbReference>
<dbReference type="NCBIfam" id="NF008907">
    <property type="entry name" value="PRK12270.1"/>
    <property type="match status" value="1"/>
</dbReference>
<dbReference type="PANTHER" id="PTHR23152:SF4">
    <property type="entry name" value="2-OXOADIPATE DEHYDROGENASE COMPLEX COMPONENT E1"/>
    <property type="match status" value="1"/>
</dbReference>
<dbReference type="PANTHER" id="PTHR23152">
    <property type="entry name" value="2-OXOGLUTARATE DEHYDROGENASE"/>
    <property type="match status" value="1"/>
</dbReference>
<dbReference type="Pfam" id="PF00676">
    <property type="entry name" value="E1_dh"/>
    <property type="match status" value="1"/>
</dbReference>
<dbReference type="Pfam" id="PF16870">
    <property type="entry name" value="OxoGdeHyase_C"/>
    <property type="match status" value="1"/>
</dbReference>
<dbReference type="Pfam" id="PF02779">
    <property type="entry name" value="Transket_pyr"/>
    <property type="match status" value="1"/>
</dbReference>
<dbReference type="PIRSF" id="PIRSF000157">
    <property type="entry name" value="Oxoglu_dh_E1"/>
    <property type="match status" value="1"/>
</dbReference>
<dbReference type="SMART" id="SM00861">
    <property type="entry name" value="Transket_pyr"/>
    <property type="match status" value="1"/>
</dbReference>
<dbReference type="SUPFAM" id="SSF52518">
    <property type="entry name" value="Thiamin diphosphate-binding fold (THDP-binding)"/>
    <property type="match status" value="2"/>
</dbReference>
<gene>
    <name evidence="1" type="primary">odhA</name>
    <name type="ordered locus">BCG9842_B4030</name>
</gene>
<accession>B7IM94</accession>
<name>ODO1_BACC2</name>
<organism>
    <name type="scientific">Bacillus cereus (strain G9842)</name>
    <dbReference type="NCBI Taxonomy" id="405531"/>
    <lineage>
        <taxon>Bacteria</taxon>
        <taxon>Bacillati</taxon>
        <taxon>Bacillota</taxon>
        <taxon>Bacilli</taxon>
        <taxon>Bacillales</taxon>
        <taxon>Bacillaceae</taxon>
        <taxon>Bacillus</taxon>
        <taxon>Bacillus cereus group</taxon>
    </lineage>
</organism>